<keyword id="KW-0227">DNA damage</keyword>
<keyword id="KW-0234">DNA repair</keyword>
<name>MUTL_ECO5E</name>
<sequence>MPIQVLPPQLANQIAAGEVVERPASVVKELVENSLDAGATRIDIDIERGGAKLIRIRDNGCGIKKDELALALARHATSKIASLDDLEAIISLGFRGEALASISSVSRLTLTSRTAEQQEAWQAYAEGRDMDVTVKPAAHPVGTTLEVLDLFYNTPARRKFLRTEKTEFNHIDEIIRRIALARFDVTINLSHNGKIVRQYRAVPEGGQKERRLGAICGTAFLEQALAIEWQHGDLTLRGWVADPNHTTPALAEIQYCYVNGRMMRDRLINHAIRQACEDKLGADQQPAFVLYLEIDPHQVDVNVHPAKHEVRFHQSRLVHDFIYQGVLSVLQQQLETPLPLDDEPQPAPRPIPENRVAAGRNHFAEPAVREPVAPRYTPAPASGSRPAAPWPNAQPGYQKQQGEVYRQLLQTPAPMQKPKAPEPQEPALAANSQSFGRVLTIVHSDCALLERDGNISLLALPVAERWLRQVQLTPGEAPVCAQPLLIPLRLKVSGEEKSALEKAQSALAELGIDFQSDAQHVTIRAVPLPLRQQNLQILIPELIGYLAKQSVFEPGNIAQWIARNLMSEHAQWSMAQAITLLADVERLCPQLVKTPPGGLLQSVDLHPAIKALKDE</sequence>
<reference key="1">
    <citation type="journal article" date="2011" name="Proc. Natl. Acad. Sci. U.S.A.">
        <title>Genomic anatomy of Escherichia coli O157:H7 outbreaks.</title>
        <authorList>
            <person name="Eppinger M."/>
            <person name="Mammel M.K."/>
            <person name="Leclerc J.E."/>
            <person name="Ravel J."/>
            <person name="Cebula T.A."/>
        </authorList>
    </citation>
    <scope>NUCLEOTIDE SEQUENCE [LARGE SCALE GENOMIC DNA]</scope>
    <source>
        <strain>EC4115 / EHEC</strain>
    </source>
</reference>
<gene>
    <name evidence="1" type="primary">mutL</name>
    <name type="ordered locus">ECH74115_5686</name>
</gene>
<evidence type="ECO:0000255" key="1">
    <source>
        <dbReference type="HAMAP-Rule" id="MF_00149"/>
    </source>
</evidence>
<evidence type="ECO:0000256" key="2">
    <source>
        <dbReference type="SAM" id="MobiDB-lite"/>
    </source>
</evidence>
<protein>
    <recommendedName>
        <fullName evidence="1">DNA mismatch repair protein MutL</fullName>
    </recommendedName>
</protein>
<feature type="chain" id="PRO_1000096648" description="DNA mismatch repair protein MutL">
    <location>
        <begin position="1"/>
        <end position="615"/>
    </location>
</feature>
<feature type="region of interest" description="Disordered" evidence="2">
    <location>
        <begin position="363"/>
        <end position="397"/>
    </location>
</feature>
<feature type="compositionally biased region" description="Low complexity" evidence="2">
    <location>
        <begin position="378"/>
        <end position="391"/>
    </location>
</feature>
<comment type="function">
    <text evidence="1">This protein is involved in the repair of mismatches in DNA. It is required for dam-dependent methyl-directed DNA mismatch repair. May act as a 'molecular matchmaker', a protein that promotes the formation of a stable complex between two or more DNA-binding proteins in an ATP-dependent manner without itself being part of a final effector complex.</text>
</comment>
<comment type="similarity">
    <text evidence="1">Belongs to the DNA mismatch repair MutL/HexB family.</text>
</comment>
<dbReference type="EMBL" id="CP001164">
    <property type="protein sequence ID" value="ACI37230.1"/>
    <property type="molecule type" value="Genomic_DNA"/>
</dbReference>
<dbReference type="RefSeq" id="WP_001122476.1">
    <property type="nucleotide sequence ID" value="NC_011353.1"/>
</dbReference>
<dbReference type="SMR" id="B5Z2H6"/>
<dbReference type="KEGG" id="ecf:ECH74115_5686"/>
<dbReference type="HOGENOM" id="CLU_004131_5_1_6"/>
<dbReference type="GO" id="GO:0032300">
    <property type="term" value="C:mismatch repair complex"/>
    <property type="evidence" value="ECO:0007669"/>
    <property type="project" value="InterPro"/>
</dbReference>
<dbReference type="GO" id="GO:0005524">
    <property type="term" value="F:ATP binding"/>
    <property type="evidence" value="ECO:0007669"/>
    <property type="project" value="InterPro"/>
</dbReference>
<dbReference type="GO" id="GO:0016887">
    <property type="term" value="F:ATP hydrolysis activity"/>
    <property type="evidence" value="ECO:0007669"/>
    <property type="project" value="InterPro"/>
</dbReference>
<dbReference type="GO" id="GO:0140664">
    <property type="term" value="F:ATP-dependent DNA damage sensor activity"/>
    <property type="evidence" value="ECO:0007669"/>
    <property type="project" value="InterPro"/>
</dbReference>
<dbReference type="GO" id="GO:0030983">
    <property type="term" value="F:mismatched DNA binding"/>
    <property type="evidence" value="ECO:0007669"/>
    <property type="project" value="InterPro"/>
</dbReference>
<dbReference type="GO" id="GO:0006298">
    <property type="term" value="P:mismatch repair"/>
    <property type="evidence" value="ECO:0007669"/>
    <property type="project" value="UniProtKB-UniRule"/>
</dbReference>
<dbReference type="CDD" id="cd16926">
    <property type="entry name" value="HATPase_MutL-MLH-PMS-like"/>
    <property type="match status" value="1"/>
</dbReference>
<dbReference type="CDD" id="cd03482">
    <property type="entry name" value="MutL_Trans_MutL"/>
    <property type="match status" value="1"/>
</dbReference>
<dbReference type="FunFam" id="3.30.230.10:FF:000013">
    <property type="entry name" value="DNA mismatch repair endonuclease MutL"/>
    <property type="match status" value="1"/>
</dbReference>
<dbReference type="FunFam" id="3.30.565.10:FF:000003">
    <property type="entry name" value="DNA mismatch repair endonuclease MutL"/>
    <property type="match status" value="1"/>
</dbReference>
<dbReference type="FunFam" id="3.30.1370.100:FF:000002">
    <property type="entry name" value="DNA mismatch repair protein MutL"/>
    <property type="match status" value="1"/>
</dbReference>
<dbReference type="Gene3D" id="3.30.230.10">
    <property type="match status" value="1"/>
</dbReference>
<dbReference type="Gene3D" id="3.30.565.10">
    <property type="entry name" value="Histidine kinase-like ATPase, C-terminal domain"/>
    <property type="match status" value="1"/>
</dbReference>
<dbReference type="Gene3D" id="3.30.1540.20">
    <property type="entry name" value="MutL, C-terminal domain, dimerisation subdomain"/>
    <property type="match status" value="1"/>
</dbReference>
<dbReference type="Gene3D" id="3.30.1370.100">
    <property type="entry name" value="MutL, C-terminal domain, regulatory subdomain"/>
    <property type="match status" value="1"/>
</dbReference>
<dbReference type="HAMAP" id="MF_00149">
    <property type="entry name" value="DNA_mis_repair"/>
    <property type="match status" value="1"/>
</dbReference>
<dbReference type="InterPro" id="IPR014762">
    <property type="entry name" value="DNA_mismatch_repair_CS"/>
</dbReference>
<dbReference type="InterPro" id="IPR020667">
    <property type="entry name" value="DNA_mismatch_repair_MutL"/>
</dbReference>
<dbReference type="InterPro" id="IPR013507">
    <property type="entry name" value="DNA_mismatch_S5_2-like"/>
</dbReference>
<dbReference type="InterPro" id="IPR036890">
    <property type="entry name" value="HATPase_C_sf"/>
</dbReference>
<dbReference type="InterPro" id="IPR002099">
    <property type="entry name" value="MutL/Mlh/PMS"/>
</dbReference>
<dbReference type="InterPro" id="IPR038973">
    <property type="entry name" value="MutL/Mlh/Pms-like"/>
</dbReference>
<dbReference type="InterPro" id="IPR014790">
    <property type="entry name" value="MutL_C"/>
</dbReference>
<dbReference type="InterPro" id="IPR042120">
    <property type="entry name" value="MutL_C_dimsub"/>
</dbReference>
<dbReference type="InterPro" id="IPR042121">
    <property type="entry name" value="MutL_C_regsub"/>
</dbReference>
<dbReference type="InterPro" id="IPR037198">
    <property type="entry name" value="MutL_C_sf"/>
</dbReference>
<dbReference type="InterPro" id="IPR020568">
    <property type="entry name" value="Ribosomal_Su5_D2-typ_SF"/>
</dbReference>
<dbReference type="InterPro" id="IPR014721">
    <property type="entry name" value="Ribsml_uS5_D2-typ_fold_subgr"/>
</dbReference>
<dbReference type="NCBIfam" id="TIGR00585">
    <property type="entry name" value="mutl"/>
    <property type="match status" value="1"/>
</dbReference>
<dbReference type="NCBIfam" id="NF000948">
    <property type="entry name" value="PRK00095.1-1"/>
    <property type="match status" value="1"/>
</dbReference>
<dbReference type="PANTHER" id="PTHR10073">
    <property type="entry name" value="DNA MISMATCH REPAIR PROTEIN MLH, PMS, MUTL"/>
    <property type="match status" value="1"/>
</dbReference>
<dbReference type="PANTHER" id="PTHR10073:SF12">
    <property type="entry name" value="DNA MISMATCH REPAIR PROTEIN MLH1"/>
    <property type="match status" value="1"/>
</dbReference>
<dbReference type="Pfam" id="PF01119">
    <property type="entry name" value="DNA_mis_repair"/>
    <property type="match status" value="1"/>
</dbReference>
<dbReference type="Pfam" id="PF13589">
    <property type="entry name" value="HATPase_c_3"/>
    <property type="match status" value="1"/>
</dbReference>
<dbReference type="Pfam" id="PF08676">
    <property type="entry name" value="MutL_C"/>
    <property type="match status" value="1"/>
</dbReference>
<dbReference type="SMART" id="SM01340">
    <property type="entry name" value="DNA_mis_repair"/>
    <property type="match status" value="1"/>
</dbReference>
<dbReference type="SMART" id="SM00853">
    <property type="entry name" value="MutL_C"/>
    <property type="match status" value="1"/>
</dbReference>
<dbReference type="SUPFAM" id="SSF55874">
    <property type="entry name" value="ATPase domain of HSP90 chaperone/DNA topoisomerase II/histidine kinase"/>
    <property type="match status" value="1"/>
</dbReference>
<dbReference type="SUPFAM" id="SSF118116">
    <property type="entry name" value="DNA mismatch repair protein MutL"/>
    <property type="match status" value="1"/>
</dbReference>
<dbReference type="SUPFAM" id="SSF54211">
    <property type="entry name" value="Ribosomal protein S5 domain 2-like"/>
    <property type="match status" value="1"/>
</dbReference>
<dbReference type="PROSITE" id="PS00058">
    <property type="entry name" value="DNA_MISMATCH_REPAIR_1"/>
    <property type="match status" value="1"/>
</dbReference>
<organism>
    <name type="scientific">Escherichia coli O157:H7 (strain EC4115 / EHEC)</name>
    <dbReference type="NCBI Taxonomy" id="444450"/>
    <lineage>
        <taxon>Bacteria</taxon>
        <taxon>Pseudomonadati</taxon>
        <taxon>Pseudomonadota</taxon>
        <taxon>Gammaproteobacteria</taxon>
        <taxon>Enterobacterales</taxon>
        <taxon>Enterobacteriaceae</taxon>
        <taxon>Escherichia</taxon>
    </lineage>
</organism>
<accession>B5Z2H6</accession>
<proteinExistence type="inferred from homology"/>